<name>RL24_BACAC</name>
<proteinExistence type="inferred from homology"/>
<feature type="chain" id="PRO_1000165923" description="Large ribosomal subunit protein uL24">
    <location>
        <begin position="1"/>
        <end position="103"/>
    </location>
</feature>
<keyword id="KW-0687">Ribonucleoprotein</keyword>
<keyword id="KW-0689">Ribosomal protein</keyword>
<keyword id="KW-0694">RNA-binding</keyword>
<keyword id="KW-0699">rRNA-binding</keyword>
<reference key="1">
    <citation type="submission" date="2008-10" db="EMBL/GenBank/DDBJ databases">
        <title>Genome sequence of Bacillus anthracis str. CDC 684.</title>
        <authorList>
            <person name="Dodson R.J."/>
            <person name="Munk A.C."/>
            <person name="Brettin T."/>
            <person name="Bruce D."/>
            <person name="Detter C."/>
            <person name="Tapia R."/>
            <person name="Han C."/>
            <person name="Sutton G."/>
            <person name="Sims D."/>
        </authorList>
    </citation>
    <scope>NUCLEOTIDE SEQUENCE [LARGE SCALE GENOMIC DNA]</scope>
    <source>
        <strain>CDC 684 / NRRL 3495</strain>
    </source>
</reference>
<accession>C3LJ93</accession>
<evidence type="ECO:0000255" key="1">
    <source>
        <dbReference type="HAMAP-Rule" id="MF_01326"/>
    </source>
</evidence>
<evidence type="ECO:0000305" key="2"/>
<sequence>MHVKKGDKVQVITGKDKGKQGVILVAFPKQNRVIVEGVNIVKKHSKPSQLNPQGGIITKEAPIHVSNVMILDPKTGEPTRVGFKVEDGKKVRIAKKSGELLDK</sequence>
<gene>
    <name evidence="1" type="primary">rplX</name>
    <name type="ordered locus">BAMEG_0137</name>
</gene>
<organism>
    <name type="scientific">Bacillus anthracis (strain CDC 684 / NRRL 3495)</name>
    <dbReference type="NCBI Taxonomy" id="568206"/>
    <lineage>
        <taxon>Bacteria</taxon>
        <taxon>Bacillati</taxon>
        <taxon>Bacillota</taxon>
        <taxon>Bacilli</taxon>
        <taxon>Bacillales</taxon>
        <taxon>Bacillaceae</taxon>
        <taxon>Bacillus</taxon>
        <taxon>Bacillus cereus group</taxon>
    </lineage>
</organism>
<dbReference type="EMBL" id="CP001215">
    <property type="protein sequence ID" value="ACP13204.1"/>
    <property type="molecule type" value="Genomic_DNA"/>
</dbReference>
<dbReference type="RefSeq" id="WP_000558200.1">
    <property type="nucleotide sequence ID" value="NC_012581.1"/>
</dbReference>
<dbReference type="SMR" id="C3LJ93"/>
<dbReference type="GeneID" id="93010932"/>
<dbReference type="KEGG" id="bah:BAMEG_0137"/>
<dbReference type="HOGENOM" id="CLU_093315_2_0_9"/>
<dbReference type="GO" id="GO:1990904">
    <property type="term" value="C:ribonucleoprotein complex"/>
    <property type="evidence" value="ECO:0007669"/>
    <property type="project" value="UniProtKB-KW"/>
</dbReference>
<dbReference type="GO" id="GO:0005840">
    <property type="term" value="C:ribosome"/>
    <property type="evidence" value="ECO:0007669"/>
    <property type="project" value="UniProtKB-KW"/>
</dbReference>
<dbReference type="GO" id="GO:0019843">
    <property type="term" value="F:rRNA binding"/>
    <property type="evidence" value="ECO:0007669"/>
    <property type="project" value="UniProtKB-UniRule"/>
</dbReference>
<dbReference type="GO" id="GO:0003735">
    <property type="term" value="F:structural constituent of ribosome"/>
    <property type="evidence" value="ECO:0007669"/>
    <property type="project" value="InterPro"/>
</dbReference>
<dbReference type="GO" id="GO:0006412">
    <property type="term" value="P:translation"/>
    <property type="evidence" value="ECO:0007669"/>
    <property type="project" value="UniProtKB-UniRule"/>
</dbReference>
<dbReference type="CDD" id="cd06089">
    <property type="entry name" value="KOW_RPL26"/>
    <property type="match status" value="1"/>
</dbReference>
<dbReference type="FunFam" id="2.30.30.30:FF:000004">
    <property type="entry name" value="50S ribosomal protein L24"/>
    <property type="match status" value="1"/>
</dbReference>
<dbReference type="Gene3D" id="2.30.30.30">
    <property type="match status" value="1"/>
</dbReference>
<dbReference type="HAMAP" id="MF_01326_B">
    <property type="entry name" value="Ribosomal_uL24_B"/>
    <property type="match status" value="1"/>
</dbReference>
<dbReference type="InterPro" id="IPR005824">
    <property type="entry name" value="KOW"/>
</dbReference>
<dbReference type="InterPro" id="IPR014722">
    <property type="entry name" value="Rib_uL2_dom2"/>
</dbReference>
<dbReference type="InterPro" id="IPR003256">
    <property type="entry name" value="Ribosomal_uL24"/>
</dbReference>
<dbReference type="InterPro" id="IPR005825">
    <property type="entry name" value="Ribosomal_uL24_CS"/>
</dbReference>
<dbReference type="InterPro" id="IPR041988">
    <property type="entry name" value="Ribosomal_uL24_KOW"/>
</dbReference>
<dbReference type="InterPro" id="IPR008991">
    <property type="entry name" value="Translation_prot_SH3-like_sf"/>
</dbReference>
<dbReference type="NCBIfam" id="TIGR01079">
    <property type="entry name" value="rplX_bact"/>
    <property type="match status" value="1"/>
</dbReference>
<dbReference type="PANTHER" id="PTHR12903">
    <property type="entry name" value="MITOCHONDRIAL RIBOSOMAL PROTEIN L24"/>
    <property type="match status" value="1"/>
</dbReference>
<dbReference type="Pfam" id="PF00467">
    <property type="entry name" value="KOW"/>
    <property type="match status" value="1"/>
</dbReference>
<dbReference type="Pfam" id="PF17136">
    <property type="entry name" value="ribosomal_L24"/>
    <property type="match status" value="1"/>
</dbReference>
<dbReference type="SMART" id="SM00739">
    <property type="entry name" value="KOW"/>
    <property type="match status" value="1"/>
</dbReference>
<dbReference type="SUPFAM" id="SSF50104">
    <property type="entry name" value="Translation proteins SH3-like domain"/>
    <property type="match status" value="1"/>
</dbReference>
<dbReference type="PROSITE" id="PS01108">
    <property type="entry name" value="RIBOSOMAL_L24"/>
    <property type="match status" value="1"/>
</dbReference>
<protein>
    <recommendedName>
        <fullName evidence="1">Large ribosomal subunit protein uL24</fullName>
    </recommendedName>
    <alternativeName>
        <fullName evidence="2">50S ribosomal protein L24</fullName>
    </alternativeName>
</protein>
<comment type="function">
    <text evidence="1">One of two assembly initiator proteins, it binds directly to the 5'-end of the 23S rRNA, where it nucleates assembly of the 50S subunit.</text>
</comment>
<comment type="function">
    <text evidence="1">One of the proteins that surrounds the polypeptide exit tunnel on the outside of the subunit.</text>
</comment>
<comment type="subunit">
    <text evidence="1">Part of the 50S ribosomal subunit.</text>
</comment>
<comment type="similarity">
    <text evidence="1">Belongs to the universal ribosomal protein uL24 family.</text>
</comment>